<dbReference type="EC" id="3.1.-.-" evidence="1"/>
<dbReference type="EMBL" id="BX640426">
    <property type="protein sequence ID" value="CAE36440.1"/>
    <property type="molecule type" value="Genomic_DNA"/>
</dbReference>
<dbReference type="RefSeq" id="WP_010927875.1">
    <property type="nucleotide sequence ID" value="NC_002928.3"/>
</dbReference>
<dbReference type="SMR" id="Q7WB68"/>
<dbReference type="GeneID" id="93202894"/>
<dbReference type="KEGG" id="bpa:BPP1139"/>
<dbReference type="HOGENOM" id="CLU_106710_0_1_4"/>
<dbReference type="Proteomes" id="UP000001421">
    <property type="component" value="Chromosome"/>
</dbReference>
<dbReference type="GO" id="GO:0005737">
    <property type="term" value="C:cytoplasm"/>
    <property type="evidence" value="ECO:0007669"/>
    <property type="project" value="UniProtKB-SubCell"/>
</dbReference>
<dbReference type="GO" id="GO:0004222">
    <property type="term" value="F:metalloendopeptidase activity"/>
    <property type="evidence" value="ECO:0007669"/>
    <property type="project" value="InterPro"/>
</dbReference>
<dbReference type="GO" id="GO:0004521">
    <property type="term" value="F:RNA endonuclease activity"/>
    <property type="evidence" value="ECO:0007669"/>
    <property type="project" value="UniProtKB-UniRule"/>
</dbReference>
<dbReference type="GO" id="GO:0008270">
    <property type="term" value="F:zinc ion binding"/>
    <property type="evidence" value="ECO:0007669"/>
    <property type="project" value="UniProtKB-UniRule"/>
</dbReference>
<dbReference type="GO" id="GO:0006364">
    <property type="term" value="P:rRNA processing"/>
    <property type="evidence" value="ECO:0007669"/>
    <property type="project" value="UniProtKB-UniRule"/>
</dbReference>
<dbReference type="Gene3D" id="3.40.390.30">
    <property type="entry name" value="Metalloproteases ('zincins'), catalytic domain"/>
    <property type="match status" value="1"/>
</dbReference>
<dbReference type="HAMAP" id="MF_00009">
    <property type="entry name" value="Endoribonucl_YbeY"/>
    <property type="match status" value="1"/>
</dbReference>
<dbReference type="InterPro" id="IPR023091">
    <property type="entry name" value="MetalPrtase_cat_dom_sf_prd"/>
</dbReference>
<dbReference type="InterPro" id="IPR002036">
    <property type="entry name" value="YbeY"/>
</dbReference>
<dbReference type="InterPro" id="IPR020549">
    <property type="entry name" value="YbeY_CS"/>
</dbReference>
<dbReference type="NCBIfam" id="TIGR00043">
    <property type="entry name" value="rRNA maturation RNase YbeY"/>
    <property type="match status" value="1"/>
</dbReference>
<dbReference type="PANTHER" id="PTHR46986">
    <property type="entry name" value="ENDORIBONUCLEASE YBEY, CHLOROPLASTIC"/>
    <property type="match status" value="1"/>
</dbReference>
<dbReference type="PANTHER" id="PTHR46986:SF1">
    <property type="entry name" value="ENDORIBONUCLEASE YBEY, CHLOROPLASTIC"/>
    <property type="match status" value="1"/>
</dbReference>
<dbReference type="Pfam" id="PF02130">
    <property type="entry name" value="YbeY"/>
    <property type="match status" value="1"/>
</dbReference>
<dbReference type="SUPFAM" id="SSF55486">
    <property type="entry name" value="Metalloproteases ('zincins'), catalytic domain"/>
    <property type="match status" value="1"/>
</dbReference>
<dbReference type="PROSITE" id="PS01306">
    <property type="entry name" value="UPF0054"/>
    <property type="match status" value="1"/>
</dbReference>
<organism>
    <name type="scientific">Bordetella parapertussis (strain 12822 / ATCC BAA-587 / NCTC 13253)</name>
    <dbReference type="NCBI Taxonomy" id="257311"/>
    <lineage>
        <taxon>Bacteria</taxon>
        <taxon>Pseudomonadati</taxon>
        <taxon>Pseudomonadota</taxon>
        <taxon>Betaproteobacteria</taxon>
        <taxon>Burkholderiales</taxon>
        <taxon>Alcaligenaceae</taxon>
        <taxon>Bordetella</taxon>
    </lineage>
</organism>
<gene>
    <name evidence="1" type="primary">ybeY</name>
    <name type="ordered locus">BPP1139</name>
</gene>
<feature type="chain" id="PRO_0000102420" description="Endoribonuclease YbeY">
    <location>
        <begin position="1"/>
        <end position="157"/>
    </location>
</feature>
<feature type="binding site" evidence="1">
    <location>
        <position position="118"/>
    </location>
    <ligand>
        <name>Zn(2+)</name>
        <dbReference type="ChEBI" id="CHEBI:29105"/>
        <note>catalytic</note>
    </ligand>
</feature>
<feature type="binding site" evidence="1">
    <location>
        <position position="122"/>
    </location>
    <ligand>
        <name>Zn(2+)</name>
        <dbReference type="ChEBI" id="CHEBI:29105"/>
        <note>catalytic</note>
    </ligand>
</feature>
<feature type="binding site" evidence="1">
    <location>
        <position position="128"/>
    </location>
    <ligand>
        <name>Zn(2+)</name>
        <dbReference type="ChEBI" id="CHEBI:29105"/>
        <note>catalytic</note>
    </ligand>
</feature>
<name>YBEY_BORPA</name>
<comment type="function">
    <text evidence="1">Single strand-specific metallo-endoribonuclease involved in late-stage 70S ribosome quality control and in maturation of the 3' terminus of the 16S rRNA.</text>
</comment>
<comment type="cofactor">
    <cofactor evidence="1">
        <name>Zn(2+)</name>
        <dbReference type="ChEBI" id="CHEBI:29105"/>
    </cofactor>
    <text evidence="1">Binds 1 zinc ion.</text>
</comment>
<comment type="subcellular location">
    <subcellularLocation>
        <location evidence="1">Cytoplasm</location>
    </subcellularLocation>
</comment>
<comment type="similarity">
    <text evidence="1">Belongs to the endoribonuclease YbeY family.</text>
</comment>
<accession>Q7WB68</accession>
<keyword id="KW-0963">Cytoplasm</keyword>
<keyword id="KW-0255">Endonuclease</keyword>
<keyword id="KW-0378">Hydrolase</keyword>
<keyword id="KW-0479">Metal-binding</keyword>
<keyword id="KW-0540">Nuclease</keyword>
<keyword id="KW-0690">Ribosome biogenesis</keyword>
<keyword id="KW-0698">rRNA processing</keyword>
<keyword id="KW-0862">Zinc</keyword>
<sequence length="157" mass="17056">MATELSLSVQYGVADARLPRWRLRRWVQYALAGAAGDGHAGLAGAELGLRLVGLAEGRRLNREFRGRDYATNVLTFEYGTGPDGVARGDIVVCVPVLAREAREQRKTLLDHAAHLTVHGTLHALGYDHIKAGEARRMEALETVVLARMGIADPYLAA</sequence>
<protein>
    <recommendedName>
        <fullName evidence="1">Endoribonuclease YbeY</fullName>
        <ecNumber evidence="1">3.1.-.-</ecNumber>
    </recommendedName>
</protein>
<proteinExistence type="inferred from homology"/>
<reference key="1">
    <citation type="journal article" date="2003" name="Nat. Genet.">
        <title>Comparative analysis of the genome sequences of Bordetella pertussis, Bordetella parapertussis and Bordetella bronchiseptica.</title>
        <authorList>
            <person name="Parkhill J."/>
            <person name="Sebaihia M."/>
            <person name="Preston A."/>
            <person name="Murphy L.D."/>
            <person name="Thomson N.R."/>
            <person name="Harris D.E."/>
            <person name="Holden M.T.G."/>
            <person name="Churcher C.M."/>
            <person name="Bentley S.D."/>
            <person name="Mungall K.L."/>
            <person name="Cerdeno-Tarraga A.-M."/>
            <person name="Temple L."/>
            <person name="James K.D."/>
            <person name="Harris B."/>
            <person name="Quail M.A."/>
            <person name="Achtman M."/>
            <person name="Atkin R."/>
            <person name="Baker S."/>
            <person name="Basham D."/>
            <person name="Bason N."/>
            <person name="Cherevach I."/>
            <person name="Chillingworth T."/>
            <person name="Collins M."/>
            <person name="Cronin A."/>
            <person name="Davis P."/>
            <person name="Doggett J."/>
            <person name="Feltwell T."/>
            <person name="Goble A."/>
            <person name="Hamlin N."/>
            <person name="Hauser H."/>
            <person name="Holroyd S."/>
            <person name="Jagels K."/>
            <person name="Leather S."/>
            <person name="Moule S."/>
            <person name="Norberczak H."/>
            <person name="O'Neil S."/>
            <person name="Ormond D."/>
            <person name="Price C."/>
            <person name="Rabbinowitsch E."/>
            <person name="Rutter S."/>
            <person name="Sanders M."/>
            <person name="Saunders D."/>
            <person name="Seeger K."/>
            <person name="Sharp S."/>
            <person name="Simmonds M."/>
            <person name="Skelton J."/>
            <person name="Squares R."/>
            <person name="Squares S."/>
            <person name="Stevens K."/>
            <person name="Unwin L."/>
            <person name="Whitehead S."/>
            <person name="Barrell B.G."/>
            <person name="Maskell D.J."/>
        </authorList>
    </citation>
    <scope>NUCLEOTIDE SEQUENCE [LARGE SCALE GENOMIC DNA]</scope>
    <source>
        <strain>12822 / ATCC BAA-587 / NCTC 13253</strain>
    </source>
</reference>
<evidence type="ECO:0000255" key="1">
    <source>
        <dbReference type="HAMAP-Rule" id="MF_00009"/>
    </source>
</evidence>